<name>DDL_ENTHA</name>
<gene>
    <name evidence="2" type="primary">ddl</name>
    <name type="ordered locus">EHR_03915</name>
</gene>
<evidence type="ECO:0000250" key="1"/>
<evidence type="ECO:0000255" key="2">
    <source>
        <dbReference type="HAMAP-Rule" id="MF_00047"/>
    </source>
</evidence>
<evidence type="ECO:0000305" key="3"/>
<organism>
    <name type="scientific">Enterococcus hirae (strain ATCC 9790 / DSM 20160 / JCM 8729 / LMG 6399 / NBRC 3181 / NCIMB 6459 / NCDO 1258 / NCTC 12367 / WDCM 00089 / R)</name>
    <dbReference type="NCBI Taxonomy" id="768486"/>
    <lineage>
        <taxon>Bacteria</taxon>
        <taxon>Bacillati</taxon>
        <taxon>Bacillota</taxon>
        <taxon>Bacilli</taxon>
        <taxon>Lactobacillales</taxon>
        <taxon>Enterococcaceae</taxon>
        <taxon>Enterococcus</taxon>
    </lineage>
</organism>
<accession>Q47827</accession>
<accession>I6SB04</accession>
<keyword id="KW-0067">ATP-binding</keyword>
<keyword id="KW-0133">Cell shape</keyword>
<keyword id="KW-0961">Cell wall biogenesis/degradation</keyword>
<keyword id="KW-0963">Cytoplasm</keyword>
<keyword id="KW-0436">Ligase</keyword>
<keyword id="KW-0460">Magnesium</keyword>
<keyword id="KW-0464">Manganese</keyword>
<keyword id="KW-0479">Metal-binding</keyword>
<keyword id="KW-0547">Nucleotide-binding</keyword>
<keyword id="KW-0573">Peptidoglycan synthesis</keyword>
<proteinExistence type="inferred from homology"/>
<comment type="function">
    <text evidence="2">Cell wall formation.</text>
</comment>
<comment type="catalytic activity">
    <reaction evidence="2">
        <text>2 D-alanine + ATP = D-alanyl-D-alanine + ADP + phosphate + H(+)</text>
        <dbReference type="Rhea" id="RHEA:11224"/>
        <dbReference type="ChEBI" id="CHEBI:15378"/>
        <dbReference type="ChEBI" id="CHEBI:30616"/>
        <dbReference type="ChEBI" id="CHEBI:43474"/>
        <dbReference type="ChEBI" id="CHEBI:57416"/>
        <dbReference type="ChEBI" id="CHEBI:57822"/>
        <dbReference type="ChEBI" id="CHEBI:456216"/>
        <dbReference type="EC" id="6.3.2.4"/>
    </reaction>
</comment>
<comment type="cofactor">
    <cofactor evidence="1">
        <name>Mg(2+)</name>
        <dbReference type="ChEBI" id="CHEBI:18420"/>
    </cofactor>
    <cofactor evidence="1">
        <name>Mn(2+)</name>
        <dbReference type="ChEBI" id="CHEBI:29035"/>
    </cofactor>
    <text evidence="1">Binds 2 magnesium or manganese ions per subunit.</text>
</comment>
<comment type="pathway">
    <text evidence="2">Cell wall biogenesis; peptidoglycan biosynthesis.</text>
</comment>
<comment type="subcellular location">
    <subcellularLocation>
        <location evidence="2">Cytoplasm</location>
    </subcellularLocation>
</comment>
<comment type="similarity">
    <text evidence="2">Belongs to the D-alanine--D-alanine ligase family.</text>
</comment>
<dbReference type="EC" id="6.3.2.4" evidence="2"/>
<dbReference type="EMBL" id="U39788">
    <property type="protein sequence ID" value="AAB17904.1"/>
    <property type="molecule type" value="Genomic_DNA"/>
</dbReference>
<dbReference type="EMBL" id="CP003504">
    <property type="protein sequence ID" value="AFM69753.1"/>
    <property type="molecule type" value="Genomic_DNA"/>
</dbReference>
<dbReference type="RefSeq" id="WP_010736859.1">
    <property type="nucleotide sequence ID" value="NZ_KB946222.1"/>
</dbReference>
<dbReference type="SMR" id="Q47827"/>
<dbReference type="KEGG" id="ehr:EHR_03915"/>
<dbReference type="eggNOG" id="COG1181">
    <property type="taxonomic scope" value="Bacteria"/>
</dbReference>
<dbReference type="HOGENOM" id="CLU_039268_0_0_9"/>
<dbReference type="OrthoDB" id="9813261at2"/>
<dbReference type="UniPathway" id="UPA00219"/>
<dbReference type="Proteomes" id="UP000002895">
    <property type="component" value="Chromosome"/>
</dbReference>
<dbReference type="GO" id="GO:0005829">
    <property type="term" value="C:cytosol"/>
    <property type="evidence" value="ECO:0007669"/>
    <property type="project" value="TreeGrafter"/>
</dbReference>
<dbReference type="GO" id="GO:0005524">
    <property type="term" value="F:ATP binding"/>
    <property type="evidence" value="ECO:0007669"/>
    <property type="project" value="UniProtKB-KW"/>
</dbReference>
<dbReference type="GO" id="GO:0008716">
    <property type="term" value="F:D-alanine-D-alanine ligase activity"/>
    <property type="evidence" value="ECO:0007669"/>
    <property type="project" value="UniProtKB-UniRule"/>
</dbReference>
<dbReference type="GO" id="GO:0046872">
    <property type="term" value="F:metal ion binding"/>
    <property type="evidence" value="ECO:0007669"/>
    <property type="project" value="UniProtKB-KW"/>
</dbReference>
<dbReference type="GO" id="GO:0071555">
    <property type="term" value="P:cell wall organization"/>
    <property type="evidence" value="ECO:0007669"/>
    <property type="project" value="UniProtKB-KW"/>
</dbReference>
<dbReference type="GO" id="GO:0009252">
    <property type="term" value="P:peptidoglycan biosynthetic process"/>
    <property type="evidence" value="ECO:0007669"/>
    <property type="project" value="UniProtKB-UniRule"/>
</dbReference>
<dbReference type="GO" id="GO:0008360">
    <property type="term" value="P:regulation of cell shape"/>
    <property type="evidence" value="ECO:0007669"/>
    <property type="project" value="UniProtKB-KW"/>
</dbReference>
<dbReference type="FunFam" id="3.30.1490.20:FF:000007">
    <property type="entry name" value="D-alanine--D-alanine ligase"/>
    <property type="match status" value="1"/>
</dbReference>
<dbReference type="FunFam" id="3.30.470.20:FF:000008">
    <property type="entry name" value="D-alanine--D-alanine ligase"/>
    <property type="match status" value="1"/>
</dbReference>
<dbReference type="Gene3D" id="3.40.50.20">
    <property type="match status" value="1"/>
</dbReference>
<dbReference type="Gene3D" id="3.30.1490.20">
    <property type="entry name" value="ATP-grasp fold, A domain"/>
    <property type="match status" value="1"/>
</dbReference>
<dbReference type="Gene3D" id="3.30.470.20">
    <property type="entry name" value="ATP-grasp fold, B domain"/>
    <property type="match status" value="1"/>
</dbReference>
<dbReference type="HAMAP" id="MF_00047">
    <property type="entry name" value="Dala_Dala_lig"/>
    <property type="match status" value="1"/>
</dbReference>
<dbReference type="InterPro" id="IPR011761">
    <property type="entry name" value="ATP-grasp"/>
</dbReference>
<dbReference type="InterPro" id="IPR013815">
    <property type="entry name" value="ATP_grasp_subdomain_1"/>
</dbReference>
<dbReference type="InterPro" id="IPR000291">
    <property type="entry name" value="D-Ala_lig_Van_CS"/>
</dbReference>
<dbReference type="InterPro" id="IPR005905">
    <property type="entry name" value="D_ala_D_ala"/>
</dbReference>
<dbReference type="InterPro" id="IPR011095">
    <property type="entry name" value="Dala_Dala_lig_C"/>
</dbReference>
<dbReference type="InterPro" id="IPR011127">
    <property type="entry name" value="Dala_Dala_lig_N"/>
</dbReference>
<dbReference type="InterPro" id="IPR016185">
    <property type="entry name" value="PreATP-grasp_dom_sf"/>
</dbReference>
<dbReference type="NCBIfam" id="TIGR01205">
    <property type="entry name" value="D_ala_D_alaTIGR"/>
    <property type="match status" value="1"/>
</dbReference>
<dbReference type="NCBIfam" id="NF002526">
    <property type="entry name" value="PRK01966.1-2"/>
    <property type="match status" value="1"/>
</dbReference>
<dbReference type="NCBIfam" id="NF002528">
    <property type="entry name" value="PRK01966.1-4"/>
    <property type="match status" value="1"/>
</dbReference>
<dbReference type="NCBIfam" id="NF002529">
    <property type="entry name" value="PRK01966.1-5"/>
    <property type="match status" value="1"/>
</dbReference>
<dbReference type="PANTHER" id="PTHR23132">
    <property type="entry name" value="D-ALANINE--D-ALANINE LIGASE"/>
    <property type="match status" value="1"/>
</dbReference>
<dbReference type="PANTHER" id="PTHR23132:SF25">
    <property type="entry name" value="D-ALANINE--D-ALANINE LIGASE A"/>
    <property type="match status" value="1"/>
</dbReference>
<dbReference type="Pfam" id="PF07478">
    <property type="entry name" value="Dala_Dala_lig_C"/>
    <property type="match status" value="1"/>
</dbReference>
<dbReference type="Pfam" id="PF01820">
    <property type="entry name" value="Dala_Dala_lig_N"/>
    <property type="match status" value="1"/>
</dbReference>
<dbReference type="PIRSF" id="PIRSF039102">
    <property type="entry name" value="Ddl/VanB"/>
    <property type="match status" value="1"/>
</dbReference>
<dbReference type="SUPFAM" id="SSF56059">
    <property type="entry name" value="Glutathione synthetase ATP-binding domain-like"/>
    <property type="match status" value="1"/>
</dbReference>
<dbReference type="SUPFAM" id="SSF52440">
    <property type="entry name" value="PreATP-grasp domain"/>
    <property type="match status" value="1"/>
</dbReference>
<dbReference type="PROSITE" id="PS50975">
    <property type="entry name" value="ATP_GRASP"/>
    <property type="match status" value="1"/>
</dbReference>
<dbReference type="PROSITE" id="PS00843">
    <property type="entry name" value="DALA_DALA_LIGASE_1"/>
    <property type="match status" value="1"/>
</dbReference>
<dbReference type="PROSITE" id="PS00844">
    <property type="entry name" value="DALA_DALA_LIGASE_2"/>
    <property type="match status" value="1"/>
</dbReference>
<reference key="1">
    <citation type="journal article" date="1996" name="J. Mol. Evol.">
        <title>Evolution of structure and substrate specificity in D-alanine:D-alanine ligases and related enzymes.</title>
        <authorList>
            <person name="Evers S."/>
            <person name="Casadewall B."/>
            <person name="Charles M."/>
            <person name="Dutka-Malen S."/>
            <person name="Galimand M."/>
            <person name="Courvalin P."/>
        </authorList>
    </citation>
    <scope>NUCLEOTIDE SEQUENCE [GENOMIC DNA]</scope>
    <source>
        <strain>ATCC 9790 / DSM 20160 / JCM 8729 / LMG 6399 / NBRC 3181 / NCIMB 6459 / NCDO 1258 / NCTC 12367 / WDCM 00089 / R</strain>
    </source>
</reference>
<reference key="2">
    <citation type="journal article" date="2012" name="J. Bacteriol.">
        <title>Genome sequence of Enterococcus hirae (Streptococcus faecalis) ATCC 9790, a model organism for the study of ion transport, bioenergetics, and copper homeostasis.</title>
        <authorList>
            <person name="Gaechter T."/>
            <person name="Wunderlin C."/>
            <person name="Schmidheini T."/>
            <person name="Solioz M."/>
        </authorList>
    </citation>
    <scope>NUCLEOTIDE SEQUENCE [LARGE SCALE GENOMIC DNA]</scope>
    <source>
        <strain>ATCC 9790 / DSM 20160 / JCM 8729 / LMG 6399 / NBRC 3181 / NCIMB 6459 / NCDO 1258 / NCTC 12367 / WDCM 00089 / R</strain>
    </source>
</reference>
<sequence>MKITLLYGGRSAEHDVSVLSAFSVLNAIYYTYYQVQLIFISKEGQWVKGPLLTEKPTSKEDLHLTWDPSGKVTDGFTGRVINPGEIKEEGTIVFPVLHGPNGEDGTIQGFLETLNLPYVGAGVLTSACAMDKIMTKYILQAAGVPQVPYVPVLKNQWKENPKKIFDQCEGSLLYPMFVKPANMGSSVGISKAENREELQNALALAYQYDSRAIVEQGIEAREIEVAVLGNEDVRTTLPGEVVKDVAFYDYDAKYINNKIEMQIPAEVPEEVYQKAQEYAKIAYTMLGGSGLSRCDFFLTNKNELFLNELNTMPGFTQFSMYPLLWENMGLKYGDLIEELIQLGINRFNQRQGFFEANE</sequence>
<feature type="chain" id="PRO_0000177823" description="D-alanine--D-alanine ligase">
    <location>
        <begin position="1"/>
        <end position="358"/>
    </location>
</feature>
<feature type="domain" description="ATP-grasp" evidence="2">
    <location>
        <begin position="136"/>
        <end position="341"/>
    </location>
</feature>
<feature type="binding site" evidence="2">
    <location>
        <begin position="169"/>
        <end position="224"/>
    </location>
    <ligand>
        <name>ATP</name>
        <dbReference type="ChEBI" id="CHEBI:30616"/>
    </ligand>
</feature>
<feature type="binding site" evidence="2">
    <location>
        <position position="295"/>
    </location>
    <ligand>
        <name>Mg(2+)</name>
        <dbReference type="ChEBI" id="CHEBI:18420"/>
        <label>1</label>
    </ligand>
</feature>
<feature type="binding site" evidence="2">
    <location>
        <position position="308"/>
    </location>
    <ligand>
        <name>Mg(2+)</name>
        <dbReference type="ChEBI" id="CHEBI:18420"/>
        <label>1</label>
    </ligand>
</feature>
<feature type="binding site" evidence="2">
    <location>
        <position position="308"/>
    </location>
    <ligand>
        <name>Mg(2+)</name>
        <dbReference type="ChEBI" id="CHEBI:18420"/>
        <label>2</label>
    </ligand>
</feature>
<feature type="binding site" evidence="2">
    <location>
        <position position="310"/>
    </location>
    <ligand>
        <name>Mg(2+)</name>
        <dbReference type="ChEBI" id="CHEBI:18420"/>
        <label>2</label>
    </ligand>
</feature>
<feature type="sequence conflict" description="In Ref. 1; AAB17904." evidence="3" ref="1">
    <original>E</original>
    <variation>N</variation>
    <location>
        <position position="355"/>
    </location>
</feature>
<protein>
    <recommendedName>
        <fullName evidence="2">D-alanine--D-alanine ligase</fullName>
        <ecNumber evidence="2">6.3.2.4</ecNumber>
    </recommendedName>
    <alternativeName>
        <fullName evidence="2">D-Ala-D-Ala ligase</fullName>
    </alternativeName>
    <alternativeName>
        <fullName evidence="2">D-alanylalanine synthetase</fullName>
    </alternativeName>
</protein>